<comment type="function">
    <text evidence="1">IF-3 binds to the 30S ribosomal subunit and shifts the equilibrium between 70S ribosomes and their 50S and 30S subunits in favor of the free subunits, thus enhancing the availability of 30S subunits on which protein synthesis initiation begins.</text>
</comment>
<comment type="subunit">
    <text evidence="1">Monomer.</text>
</comment>
<comment type="subcellular location">
    <subcellularLocation>
        <location evidence="1">Cytoplasm</location>
    </subcellularLocation>
</comment>
<comment type="similarity">
    <text evidence="1">Belongs to the IF-3 family.</text>
</comment>
<sequence length="180" mass="21061">MIIFRRCVFINHRDFQVNEQIRDKEVRLIDQDGKQIGIMSAKEAYKIAQERHLDLVKIVPNANPPVCKLMDFGKYRYELSKREKEAKKKQKIINVKEIRMSPNIEDHDFGVKLKSAIKFLKDGDKVKVTIRFRGREAAHTSLAEDLLKRFAEELREYGNVEKAPSMDGRNMMMVIAPKKQ</sequence>
<proteinExistence type="inferred from homology"/>
<feature type="chain" id="PRO_0000177599" description="Translation initiation factor IF-3">
    <location>
        <begin position="1"/>
        <end position="180"/>
    </location>
</feature>
<accession>Q8R9C2</accession>
<gene>
    <name evidence="1" type="primary">infC</name>
    <name type="ordered locus">TTE1693</name>
</gene>
<protein>
    <recommendedName>
        <fullName evidence="1">Translation initiation factor IF-3</fullName>
    </recommendedName>
</protein>
<keyword id="KW-0963">Cytoplasm</keyword>
<keyword id="KW-0396">Initiation factor</keyword>
<keyword id="KW-0648">Protein biosynthesis</keyword>
<keyword id="KW-1185">Reference proteome</keyword>
<reference key="1">
    <citation type="journal article" date="2002" name="Genome Res.">
        <title>A complete sequence of the T. tengcongensis genome.</title>
        <authorList>
            <person name="Bao Q."/>
            <person name="Tian Y."/>
            <person name="Li W."/>
            <person name="Xu Z."/>
            <person name="Xuan Z."/>
            <person name="Hu S."/>
            <person name="Dong W."/>
            <person name="Yang J."/>
            <person name="Chen Y."/>
            <person name="Xue Y."/>
            <person name="Xu Y."/>
            <person name="Lai X."/>
            <person name="Huang L."/>
            <person name="Dong X."/>
            <person name="Ma Y."/>
            <person name="Ling L."/>
            <person name="Tan H."/>
            <person name="Chen R."/>
            <person name="Wang J."/>
            <person name="Yu J."/>
            <person name="Yang H."/>
        </authorList>
    </citation>
    <scope>NUCLEOTIDE SEQUENCE [LARGE SCALE GENOMIC DNA]</scope>
    <source>
        <strain>DSM 15242 / JCM 11007 / NBRC 100824 / MB4</strain>
    </source>
</reference>
<name>IF3_CALS4</name>
<dbReference type="EMBL" id="AE008691">
    <property type="protein sequence ID" value="AAM24894.1"/>
    <property type="molecule type" value="Genomic_DNA"/>
</dbReference>
<dbReference type="SMR" id="Q8R9C2"/>
<dbReference type="STRING" id="273068.TTE1693"/>
<dbReference type="KEGG" id="tte:TTE1693"/>
<dbReference type="eggNOG" id="COG0290">
    <property type="taxonomic scope" value="Bacteria"/>
</dbReference>
<dbReference type="HOGENOM" id="CLU_054919_3_2_9"/>
<dbReference type="Proteomes" id="UP000000555">
    <property type="component" value="Chromosome"/>
</dbReference>
<dbReference type="GO" id="GO:0005829">
    <property type="term" value="C:cytosol"/>
    <property type="evidence" value="ECO:0007669"/>
    <property type="project" value="TreeGrafter"/>
</dbReference>
<dbReference type="GO" id="GO:0016020">
    <property type="term" value="C:membrane"/>
    <property type="evidence" value="ECO:0007669"/>
    <property type="project" value="TreeGrafter"/>
</dbReference>
<dbReference type="GO" id="GO:0043022">
    <property type="term" value="F:ribosome binding"/>
    <property type="evidence" value="ECO:0007669"/>
    <property type="project" value="TreeGrafter"/>
</dbReference>
<dbReference type="GO" id="GO:0003743">
    <property type="term" value="F:translation initiation factor activity"/>
    <property type="evidence" value="ECO:0007669"/>
    <property type="project" value="UniProtKB-UniRule"/>
</dbReference>
<dbReference type="GO" id="GO:0032790">
    <property type="term" value="P:ribosome disassembly"/>
    <property type="evidence" value="ECO:0007669"/>
    <property type="project" value="TreeGrafter"/>
</dbReference>
<dbReference type="FunFam" id="3.10.20.80:FF:000001">
    <property type="entry name" value="Translation initiation factor IF-3"/>
    <property type="match status" value="1"/>
</dbReference>
<dbReference type="FunFam" id="3.30.110.10:FF:000001">
    <property type="entry name" value="Translation initiation factor IF-3"/>
    <property type="match status" value="1"/>
</dbReference>
<dbReference type="Gene3D" id="3.30.110.10">
    <property type="entry name" value="Translation initiation factor 3 (IF-3), C-terminal domain"/>
    <property type="match status" value="1"/>
</dbReference>
<dbReference type="Gene3D" id="3.10.20.80">
    <property type="entry name" value="Translation initiation factor 3 (IF-3), N-terminal domain"/>
    <property type="match status" value="1"/>
</dbReference>
<dbReference type="HAMAP" id="MF_00080">
    <property type="entry name" value="IF_3"/>
    <property type="match status" value="1"/>
</dbReference>
<dbReference type="InterPro" id="IPR036788">
    <property type="entry name" value="T_IF-3_C_sf"/>
</dbReference>
<dbReference type="InterPro" id="IPR036787">
    <property type="entry name" value="T_IF-3_N_sf"/>
</dbReference>
<dbReference type="InterPro" id="IPR019813">
    <property type="entry name" value="Translation_initiation_fac3_CS"/>
</dbReference>
<dbReference type="InterPro" id="IPR001288">
    <property type="entry name" value="Translation_initiation_fac_3"/>
</dbReference>
<dbReference type="InterPro" id="IPR019815">
    <property type="entry name" value="Translation_initiation_fac_3_C"/>
</dbReference>
<dbReference type="InterPro" id="IPR019814">
    <property type="entry name" value="Translation_initiation_fac_3_N"/>
</dbReference>
<dbReference type="NCBIfam" id="TIGR00168">
    <property type="entry name" value="infC"/>
    <property type="match status" value="1"/>
</dbReference>
<dbReference type="PANTHER" id="PTHR10938">
    <property type="entry name" value="TRANSLATION INITIATION FACTOR IF-3"/>
    <property type="match status" value="1"/>
</dbReference>
<dbReference type="PANTHER" id="PTHR10938:SF0">
    <property type="entry name" value="TRANSLATION INITIATION FACTOR IF-3, MITOCHONDRIAL"/>
    <property type="match status" value="1"/>
</dbReference>
<dbReference type="Pfam" id="PF00707">
    <property type="entry name" value="IF3_C"/>
    <property type="match status" value="1"/>
</dbReference>
<dbReference type="Pfam" id="PF05198">
    <property type="entry name" value="IF3_N"/>
    <property type="match status" value="1"/>
</dbReference>
<dbReference type="SUPFAM" id="SSF55200">
    <property type="entry name" value="Translation initiation factor IF3, C-terminal domain"/>
    <property type="match status" value="1"/>
</dbReference>
<dbReference type="SUPFAM" id="SSF54364">
    <property type="entry name" value="Translation initiation factor IF3, N-terminal domain"/>
    <property type="match status" value="1"/>
</dbReference>
<dbReference type="PROSITE" id="PS00938">
    <property type="entry name" value="IF3"/>
    <property type="match status" value="1"/>
</dbReference>
<evidence type="ECO:0000255" key="1">
    <source>
        <dbReference type="HAMAP-Rule" id="MF_00080"/>
    </source>
</evidence>
<organism>
    <name type="scientific">Caldanaerobacter subterraneus subsp. tengcongensis (strain DSM 15242 / JCM 11007 / NBRC 100824 / MB4)</name>
    <name type="common">Thermoanaerobacter tengcongensis</name>
    <dbReference type="NCBI Taxonomy" id="273068"/>
    <lineage>
        <taxon>Bacteria</taxon>
        <taxon>Bacillati</taxon>
        <taxon>Bacillota</taxon>
        <taxon>Clostridia</taxon>
        <taxon>Thermoanaerobacterales</taxon>
        <taxon>Thermoanaerobacteraceae</taxon>
        <taxon>Caldanaerobacter</taxon>
    </lineage>
</organism>